<gene>
    <name type="ordered locus">TK0954</name>
</gene>
<reference key="1">
    <citation type="journal article" date="2005" name="Genome Res.">
        <title>Complete genome sequence of the hyperthermophilic archaeon Thermococcus kodakaraensis KOD1 and comparison with Pyrococcus genomes.</title>
        <authorList>
            <person name="Fukui T."/>
            <person name="Atomi H."/>
            <person name="Kanai T."/>
            <person name="Matsumi R."/>
            <person name="Fujiwara S."/>
            <person name="Imanaka T."/>
        </authorList>
    </citation>
    <scope>NUCLEOTIDE SEQUENCE [LARGE SCALE GENOMIC DNA]</scope>
    <source>
        <strain>ATCC BAA-918 / JCM 12380 / KOD1</strain>
    </source>
</reference>
<name>NTPPA_THEKO</name>
<organism>
    <name type="scientific">Thermococcus kodakarensis (strain ATCC BAA-918 / JCM 12380 / KOD1)</name>
    <name type="common">Pyrococcus kodakaraensis (strain KOD1)</name>
    <dbReference type="NCBI Taxonomy" id="69014"/>
    <lineage>
        <taxon>Archaea</taxon>
        <taxon>Methanobacteriati</taxon>
        <taxon>Methanobacteriota</taxon>
        <taxon>Thermococci</taxon>
        <taxon>Thermococcales</taxon>
        <taxon>Thermococcaceae</taxon>
        <taxon>Thermococcus</taxon>
    </lineage>
</organism>
<accession>Q5JI98</accession>
<evidence type="ECO:0000255" key="1">
    <source>
        <dbReference type="HAMAP-Rule" id="MF_00528"/>
    </source>
</evidence>
<feature type="chain" id="PRO_0000123089" description="dTTP/UTP pyrophosphatase">
    <location>
        <begin position="1"/>
        <end position="188"/>
    </location>
</feature>
<feature type="active site" description="Proton acceptor" evidence="1">
    <location>
        <position position="67"/>
    </location>
</feature>
<feature type="site" description="Important for substrate specificity" evidence="1">
    <location>
        <position position="10"/>
    </location>
</feature>
<feature type="site" description="Important for substrate specificity" evidence="1">
    <location>
        <position position="68"/>
    </location>
</feature>
<feature type="site" description="Important for substrate specificity" evidence="1">
    <location>
        <position position="150"/>
    </location>
</feature>
<comment type="function">
    <text evidence="1">Nucleoside triphosphate pyrophosphatase that hydrolyzes dTTP and UTP. May have a dual role in cell division arrest and in preventing the incorporation of modified nucleotides into cellular nucleic acids.</text>
</comment>
<comment type="catalytic activity">
    <reaction evidence="1">
        <text>dTTP + H2O = dTMP + diphosphate + H(+)</text>
        <dbReference type="Rhea" id="RHEA:28534"/>
        <dbReference type="ChEBI" id="CHEBI:15377"/>
        <dbReference type="ChEBI" id="CHEBI:15378"/>
        <dbReference type="ChEBI" id="CHEBI:33019"/>
        <dbReference type="ChEBI" id="CHEBI:37568"/>
        <dbReference type="ChEBI" id="CHEBI:63528"/>
        <dbReference type="EC" id="3.6.1.9"/>
    </reaction>
</comment>
<comment type="catalytic activity">
    <reaction evidence="1">
        <text>UTP + H2O = UMP + diphosphate + H(+)</text>
        <dbReference type="Rhea" id="RHEA:29395"/>
        <dbReference type="ChEBI" id="CHEBI:15377"/>
        <dbReference type="ChEBI" id="CHEBI:15378"/>
        <dbReference type="ChEBI" id="CHEBI:33019"/>
        <dbReference type="ChEBI" id="CHEBI:46398"/>
        <dbReference type="ChEBI" id="CHEBI:57865"/>
        <dbReference type="EC" id="3.6.1.9"/>
    </reaction>
</comment>
<comment type="cofactor">
    <cofactor evidence="1">
        <name>a divalent metal cation</name>
        <dbReference type="ChEBI" id="CHEBI:60240"/>
    </cofactor>
</comment>
<comment type="subcellular location">
    <subcellularLocation>
        <location evidence="1">Cytoplasm</location>
    </subcellularLocation>
</comment>
<comment type="similarity">
    <text evidence="1">Belongs to the Maf family. YhdE subfamily.</text>
</comment>
<keyword id="KW-0963">Cytoplasm</keyword>
<keyword id="KW-0378">Hydrolase</keyword>
<keyword id="KW-0546">Nucleotide metabolism</keyword>
<keyword id="KW-1185">Reference proteome</keyword>
<proteinExistence type="inferred from homology"/>
<dbReference type="EC" id="3.6.1.9" evidence="1"/>
<dbReference type="EMBL" id="AP006878">
    <property type="protein sequence ID" value="BAD85143.1"/>
    <property type="molecule type" value="Genomic_DNA"/>
</dbReference>
<dbReference type="RefSeq" id="WP_011249905.1">
    <property type="nucleotide sequence ID" value="NC_006624.1"/>
</dbReference>
<dbReference type="SMR" id="Q5JI98"/>
<dbReference type="STRING" id="69014.TK0954"/>
<dbReference type="EnsemblBacteria" id="BAD85143">
    <property type="protein sequence ID" value="BAD85143"/>
    <property type="gene ID" value="TK0954"/>
</dbReference>
<dbReference type="GeneID" id="78447467"/>
<dbReference type="KEGG" id="tko:TK0954"/>
<dbReference type="PATRIC" id="fig|69014.16.peg.932"/>
<dbReference type="eggNOG" id="arCOG05007">
    <property type="taxonomic scope" value="Archaea"/>
</dbReference>
<dbReference type="HOGENOM" id="CLU_040416_0_0_2"/>
<dbReference type="InParanoid" id="Q5JI98"/>
<dbReference type="OrthoDB" id="45223at2157"/>
<dbReference type="PhylomeDB" id="Q5JI98"/>
<dbReference type="Proteomes" id="UP000000536">
    <property type="component" value="Chromosome"/>
</dbReference>
<dbReference type="GO" id="GO:0005737">
    <property type="term" value="C:cytoplasm"/>
    <property type="evidence" value="ECO:0007669"/>
    <property type="project" value="UniProtKB-SubCell"/>
</dbReference>
<dbReference type="GO" id="GO:0036218">
    <property type="term" value="F:dTTP diphosphatase activity"/>
    <property type="evidence" value="ECO:0007669"/>
    <property type="project" value="RHEA"/>
</dbReference>
<dbReference type="GO" id="GO:0047429">
    <property type="term" value="F:nucleoside triphosphate diphosphatase activity"/>
    <property type="evidence" value="ECO:0000318"/>
    <property type="project" value="GO_Central"/>
</dbReference>
<dbReference type="GO" id="GO:0036221">
    <property type="term" value="F:UTP diphosphatase activity"/>
    <property type="evidence" value="ECO:0007669"/>
    <property type="project" value="RHEA"/>
</dbReference>
<dbReference type="GO" id="GO:0009117">
    <property type="term" value="P:nucleotide metabolic process"/>
    <property type="evidence" value="ECO:0007669"/>
    <property type="project" value="UniProtKB-KW"/>
</dbReference>
<dbReference type="CDD" id="cd00555">
    <property type="entry name" value="Maf"/>
    <property type="match status" value="1"/>
</dbReference>
<dbReference type="Gene3D" id="3.90.950.10">
    <property type="match status" value="1"/>
</dbReference>
<dbReference type="HAMAP" id="MF_00528">
    <property type="entry name" value="Maf"/>
    <property type="match status" value="1"/>
</dbReference>
<dbReference type="InterPro" id="IPR029001">
    <property type="entry name" value="ITPase-like_fam"/>
</dbReference>
<dbReference type="InterPro" id="IPR003697">
    <property type="entry name" value="Maf-like"/>
</dbReference>
<dbReference type="NCBIfam" id="TIGR00172">
    <property type="entry name" value="maf"/>
    <property type="match status" value="1"/>
</dbReference>
<dbReference type="PANTHER" id="PTHR43213">
    <property type="entry name" value="BIFUNCTIONAL DTTP/UTP PYROPHOSPHATASE/METHYLTRANSFERASE PROTEIN-RELATED"/>
    <property type="match status" value="1"/>
</dbReference>
<dbReference type="PANTHER" id="PTHR43213:SF5">
    <property type="entry name" value="BIFUNCTIONAL DTTP_UTP PYROPHOSPHATASE_METHYLTRANSFERASE PROTEIN-RELATED"/>
    <property type="match status" value="1"/>
</dbReference>
<dbReference type="Pfam" id="PF02545">
    <property type="entry name" value="Maf"/>
    <property type="match status" value="1"/>
</dbReference>
<dbReference type="PIRSF" id="PIRSF006305">
    <property type="entry name" value="Maf"/>
    <property type="match status" value="1"/>
</dbReference>
<dbReference type="SUPFAM" id="SSF52972">
    <property type="entry name" value="ITPase-like"/>
    <property type="match status" value="1"/>
</dbReference>
<protein>
    <recommendedName>
        <fullName evidence="1">dTTP/UTP pyrophosphatase</fullName>
        <shortName evidence="1">dTTPase/UTPase</shortName>
        <ecNumber evidence="1">3.6.1.9</ecNumber>
    </recommendedName>
    <alternativeName>
        <fullName evidence="1">Nucleoside triphosphate pyrophosphatase</fullName>
    </alternativeName>
    <alternativeName>
        <fullName evidence="1">Nucleotide pyrophosphatase</fullName>
        <shortName evidence="1">Nucleotide PPase</shortName>
    </alternativeName>
</protein>
<sequence>MLVLASASPRRREILSRFIREFQIIPSSASEECSIADPREHALELARRKAREVYERLGKKATVIGADTVVSIGGKILGKPGNEEEAFRMLKTLSGRMHLVTTGYCIIHRGEEHCGAVVTEVKFRELDEDLIWAYIRTGEPMDKAGAYGIQGKGGLFVEWIRGDYYNVVGFPIEIIWKLKELGFDVLSR</sequence>